<sequence length="269" mass="29978">MSLEVNWEQIASSEAIREQLVDWLNDQLKAVEVPKYLADIHVTSLSLGSKAPEITIRDIGKPFDDFYDIEEERAGTGEGDEDDGRVAPTSTPMKHQTSGSSDQTDASNPISPSTSHDHENDMQFVTEIKYDSDICVEVAAQLLMNYPAEKFISLPVRLKLSDLLIHTLAVVAYVNHRVFISLLCDISENEDTDNTESHSGNLRALSSKTASRIDVVKRLKVESELGSYEPDNGSILRSVGKIETFLVDTIRNLLVQEVGWPNWIEFQGV</sequence>
<organism>
    <name type="scientific">Komagataella phaffii (strain GS115 / ATCC 20864)</name>
    <name type="common">Yeast</name>
    <name type="synonym">Pichia pastoris</name>
    <dbReference type="NCBI Taxonomy" id="644223"/>
    <lineage>
        <taxon>Eukaryota</taxon>
        <taxon>Fungi</taxon>
        <taxon>Dikarya</taxon>
        <taxon>Ascomycota</taxon>
        <taxon>Saccharomycotina</taxon>
        <taxon>Pichiomycetes</taxon>
        <taxon>Pichiales</taxon>
        <taxon>Pichiaceae</taxon>
        <taxon>Komagataella</taxon>
    </lineage>
</organism>
<comment type="function">
    <text evidence="1">Component of the ERMES/MDM complex, which serves as a molecular tether to connect the endoplasmic reticulum (ER) and mitochondria. Components of this complex are involved in the control of mitochondrial shape and protein biogenesis, and function in nonvesicular lipid trafficking between the ER and mitochondria. MDM12 is required for the interaction of the ER-resident membrane protein MMM1 and the outer mitochondrial membrane-resident beta-barrel protein MDM10. The MDM12-MMM1 subcomplex functions in the major beta-barrel assembly pathway that is responsible for biogenesis of all mitochondrial outer membrane beta-barrel proteins, and acts in a late step after the SAM complex. The MDM10-MDM12-MMM1 subcomplex further acts in the TOM40-specific pathway after the action of the MDM12-MMM1 complex. Essential for establishing and maintaining the structure of mitochondria and maintenance of mtDNA nucleoids.</text>
</comment>
<comment type="subunit">
    <text evidence="1">Component of the ER-mitochondria encounter structure (ERMES) or MDM complex, composed of MMM1, MDM10, MDM12 and MDM34. A MMM1 homodimer associates with one molecule of MDM12 on each side in a pairwise head-to-tail manner, and the SMP-LTD domains of MMM1 and MDM12 generate a continuous hydrophobic tunnel for phospholipid trafficking.</text>
</comment>
<comment type="subcellular location">
    <subcellularLocation>
        <location evidence="1">Mitochondrion outer membrane</location>
        <topology evidence="1">Peripheral membrane protein</topology>
        <orientation evidence="1">Cytoplasmic side</orientation>
    </subcellularLocation>
    <subcellularLocation>
        <location evidence="1">Endoplasmic reticulum membrane</location>
        <topology evidence="1">Peripheral membrane protein</topology>
        <orientation evidence="1">Cytoplasmic side</orientation>
    </subcellularLocation>
    <text evidence="1">The ERMES/MDM complex localizes to a few discrete foci (around 10 per single cell), that represent mitochondria-endoplasmic reticulum junctions. These foci are often found next to mtDNA nucleoids.</text>
</comment>
<comment type="domain">
    <text evidence="1">The SMP-LTD domain is a barrel-like domain that can bind various types of glycerophospholipids in its interior and mediate their transfer between two adjacent bilayers.</text>
</comment>
<comment type="similarity">
    <text evidence="1">Belongs to the MDM12 family.</text>
</comment>
<name>MDM12_KOMPG</name>
<accession>C4R415</accession>
<dbReference type="EMBL" id="FN392321">
    <property type="protein sequence ID" value="CAY70301.1"/>
    <property type="molecule type" value="Genomic_DNA"/>
</dbReference>
<dbReference type="RefSeq" id="XP_002492480.1">
    <property type="nucleotide sequence ID" value="XM_002492435.1"/>
</dbReference>
<dbReference type="SMR" id="C4R415"/>
<dbReference type="FunCoup" id="C4R415">
    <property type="interactions" value="57"/>
</dbReference>
<dbReference type="STRING" id="644223.C4R415"/>
<dbReference type="EnsemblFungi" id="CAY70301">
    <property type="protein sequence ID" value="CAY70301"/>
    <property type="gene ID" value="PAS_chr3_0263"/>
</dbReference>
<dbReference type="GeneID" id="8200204"/>
<dbReference type="KEGG" id="ppa:PAS_chr3_0263"/>
<dbReference type="eggNOG" id="ENOG502QQS2">
    <property type="taxonomic scope" value="Eukaryota"/>
</dbReference>
<dbReference type="HOGENOM" id="CLU_026794_2_0_1"/>
<dbReference type="InParanoid" id="C4R415"/>
<dbReference type="OMA" id="AAWPSWI"/>
<dbReference type="OrthoDB" id="3356905at2759"/>
<dbReference type="Proteomes" id="UP000000314">
    <property type="component" value="Chromosome 3"/>
</dbReference>
<dbReference type="GO" id="GO:0005789">
    <property type="term" value="C:endoplasmic reticulum membrane"/>
    <property type="evidence" value="ECO:0007669"/>
    <property type="project" value="UniProtKB-SubCell"/>
</dbReference>
<dbReference type="GO" id="GO:0032865">
    <property type="term" value="C:ERMES complex"/>
    <property type="evidence" value="ECO:0007669"/>
    <property type="project" value="UniProtKB-UniRule"/>
</dbReference>
<dbReference type="GO" id="GO:0008289">
    <property type="term" value="F:lipid binding"/>
    <property type="evidence" value="ECO:0007669"/>
    <property type="project" value="UniProtKB-KW"/>
</dbReference>
<dbReference type="GO" id="GO:0000002">
    <property type="term" value="P:mitochondrial genome maintenance"/>
    <property type="evidence" value="ECO:0007669"/>
    <property type="project" value="UniProtKB-UniRule"/>
</dbReference>
<dbReference type="GO" id="GO:1990456">
    <property type="term" value="P:mitochondrion-endoplasmic reticulum membrane tethering"/>
    <property type="evidence" value="ECO:0007669"/>
    <property type="project" value="TreeGrafter"/>
</dbReference>
<dbReference type="GO" id="GO:0015914">
    <property type="term" value="P:phospholipid transport"/>
    <property type="evidence" value="ECO:0007669"/>
    <property type="project" value="TreeGrafter"/>
</dbReference>
<dbReference type="GO" id="GO:0045040">
    <property type="term" value="P:protein insertion into mitochondrial outer membrane"/>
    <property type="evidence" value="ECO:0007669"/>
    <property type="project" value="UniProtKB-UniRule"/>
</dbReference>
<dbReference type="CDD" id="cd21672">
    <property type="entry name" value="SMP_Mdm12"/>
    <property type="match status" value="1"/>
</dbReference>
<dbReference type="HAMAP" id="MF_03104">
    <property type="entry name" value="Mdm12"/>
    <property type="match status" value="1"/>
</dbReference>
<dbReference type="InterPro" id="IPR027532">
    <property type="entry name" value="Mdm12"/>
</dbReference>
<dbReference type="InterPro" id="IPR031468">
    <property type="entry name" value="SMP_LBD"/>
</dbReference>
<dbReference type="PANTHER" id="PTHR28204">
    <property type="entry name" value="MITOCHONDRIAL DISTRIBUTION AND MORPHOLOGY PROTEIN 12"/>
    <property type="match status" value="1"/>
</dbReference>
<dbReference type="PANTHER" id="PTHR28204:SF1">
    <property type="entry name" value="MITOCHONDRIAL DISTRIBUTION AND MORPHOLOGY PROTEIN 12"/>
    <property type="match status" value="1"/>
</dbReference>
<dbReference type="PROSITE" id="PS51847">
    <property type="entry name" value="SMP"/>
    <property type="match status" value="1"/>
</dbReference>
<keyword id="KW-0256">Endoplasmic reticulum</keyword>
<keyword id="KW-0445">Lipid transport</keyword>
<keyword id="KW-0446">Lipid-binding</keyword>
<keyword id="KW-0472">Membrane</keyword>
<keyword id="KW-0496">Mitochondrion</keyword>
<keyword id="KW-1000">Mitochondrion outer membrane</keyword>
<keyword id="KW-1185">Reference proteome</keyword>
<keyword id="KW-0813">Transport</keyword>
<feature type="chain" id="PRO_0000384304" description="Mitochondrial distribution and morphology protein 12">
    <location>
        <begin position="1"/>
        <end position="269"/>
    </location>
</feature>
<feature type="domain" description="SMP-LTD" evidence="1">
    <location>
        <begin position="1"/>
        <end position="269"/>
    </location>
</feature>
<feature type="region of interest" description="Disordered" evidence="2">
    <location>
        <begin position="72"/>
        <end position="119"/>
    </location>
</feature>
<feature type="compositionally biased region" description="Polar residues" evidence="2">
    <location>
        <begin position="88"/>
        <end position="114"/>
    </location>
</feature>
<proteinExistence type="inferred from homology"/>
<evidence type="ECO:0000255" key="1">
    <source>
        <dbReference type="HAMAP-Rule" id="MF_03104"/>
    </source>
</evidence>
<evidence type="ECO:0000256" key="2">
    <source>
        <dbReference type="SAM" id="MobiDB-lite"/>
    </source>
</evidence>
<protein>
    <recommendedName>
        <fullName evidence="1">Mitochondrial distribution and morphology protein 12</fullName>
    </recommendedName>
    <alternativeName>
        <fullName evidence="1">Mitochondrial inheritance component MDM12</fullName>
    </alternativeName>
</protein>
<gene>
    <name evidence="1" type="primary">MDM12</name>
    <name type="ordered locus">PAS_chr3_0263</name>
</gene>
<reference key="1">
    <citation type="journal article" date="2009" name="Nat. Biotechnol.">
        <title>Genome sequence of the recombinant protein production host Pichia pastoris.</title>
        <authorList>
            <person name="De Schutter K."/>
            <person name="Lin Y.-C."/>
            <person name="Tiels P."/>
            <person name="Van Hecke A."/>
            <person name="Glinka S."/>
            <person name="Weber-Lehmann J."/>
            <person name="Rouze P."/>
            <person name="Van de Peer Y."/>
            <person name="Callewaert N."/>
        </authorList>
    </citation>
    <scope>NUCLEOTIDE SEQUENCE [LARGE SCALE GENOMIC DNA]</scope>
    <source>
        <strain>GS115 / ATCC 20864</strain>
    </source>
</reference>